<name>NDUB2_HUMAN</name>
<accession>O95178</accession>
<accession>Q6FGI6</accession>
<proteinExistence type="evidence at protein level"/>
<protein>
    <recommendedName>
        <fullName>NADH dehydrogenase [ubiquinone] 1 beta subcomplex subunit 2, mitochondrial</fullName>
    </recommendedName>
    <alternativeName>
        <fullName>Complex I-AGGG</fullName>
        <shortName>CI-AGGG</shortName>
    </alternativeName>
    <alternativeName>
        <fullName>NADH-ubiquinone oxidoreductase AGGG subunit</fullName>
    </alternativeName>
</protein>
<organism>
    <name type="scientific">Homo sapiens</name>
    <name type="common">Human</name>
    <dbReference type="NCBI Taxonomy" id="9606"/>
    <lineage>
        <taxon>Eukaryota</taxon>
        <taxon>Metazoa</taxon>
        <taxon>Chordata</taxon>
        <taxon>Craniata</taxon>
        <taxon>Vertebrata</taxon>
        <taxon>Euteleostomi</taxon>
        <taxon>Mammalia</taxon>
        <taxon>Eutheria</taxon>
        <taxon>Euarchontoglires</taxon>
        <taxon>Primates</taxon>
        <taxon>Haplorrhini</taxon>
        <taxon>Catarrhini</taxon>
        <taxon>Hominidae</taxon>
        <taxon>Homo</taxon>
    </lineage>
</organism>
<gene>
    <name type="primary">NDUFB2</name>
</gene>
<comment type="function">
    <text evidence="4">Accessory subunit of the mitochondrial membrane respiratory chain NADH dehydrogenase (Complex I), that is believed not to be involved in catalysis. Complex I functions in the transfer of electrons from NADH to the respiratory chain. The immediate electron acceptor for the enzyme is believed to be ubiquinone.</text>
</comment>
<comment type="subunit">
    <text evidence="2 4">Complex I is composed of 45 different subunits.</text>
</comment>
<comment type="subcellular location">
    <subcellularLocation>
        <location evidence="6">Mitochondrion inner membrane</location>
        <topology evidence="5">Peripheral membrane protein</topology>
        <orientation evidence="5">Matrix side</orientation>
    </subcellularLocation>
</comment>
<comment type="similarity">
    <text evidence="5">Belongs to the complex I NDUFB2 subunit family.</text>
</comment>
<keyword id="KW-0002">3D-structure</keyword>
<keyword id="KW-0903">Direct protein sequencing</keyword>
<keyword id="KW-0249">Electron transport</keyword>
<keyword id="KW-0472">Membrane</keyword>
<keyword id="KW-0496">Mitochondrion</keyword>
<keyword id="KW-0999">Mitochondrion inner membrane</keyword>
<keyword id="KW-1267">Proteomics identification</keyword>
<keyword id="KW-1185">Reference proteome</keyword>
<keyword id="KW-0679">Respiratory chain</keyword>
<keyword id="KW-0809">Transit peptide</keyword>
<keyword id="KW-0813">Transport</keyword>
<sequence length="105" mass="12058">MSALTRLASFARVGGRLFRSGCARTAGDGGVRHAGGGVHIEPRYRQFPQLTRSQVFQSEFFSGLMWFWILWRFWHDSEEVLGHFPYPDPSQWTDEELGIPPDDED</sequence>
<feature type="transit peptide" description="Mitochondrion" evidence="3 7">
    <location>
        <begin position="1"/>
        <end position="33"/>
    </location>
</feature>
<feature type="chain" id="PRO_0000020042" description="NADH dehydrogenase [ubiquinone] 1 beta subcomplex subunit 2, mitochondrial">
    <location>
        <begin position="34"/>
        <end position="105"/>
    </location>
</feature>
<feature type="region of interest" description="Disordered" evidence="1">
    <location>
        <begin position="85"/>
        <end position="105"/>
    </location>
</feature>
<feature type="compositionally biased region" description="Acidic residues" evidence="1">
    <location>
        <begin position="93"/>
        <end position="105"/>
    </location>
</feature>
<evidence type="ECO:0000256" key="1">
    <source>
        <dbReference type="SAM" id="MobiDB-lite"/>
    </source>
</evidence>
<evidence type="ECO:0000269" key="2">
    <source>
    </source>
</evidence>
<evidence type="ECO:0000269" key="3">
    <source>
    </source>
</evidence>
<evidence type="ECO:0000269" key="4">
    <source>
    </source>
</evidence>
<evidence type="ECO:0000305" key="5"/>
<evidence type="ECO:0000305" key="6">
    <source>
    </source>
</evidence>
<evidence type="ECO:0007744" key="7">
    <source>
    </source>
</evidence>
<reference key="1">
    <citation type="journal article" date="1998" name="Biochem. Biophys. Res. Commun.">
        <title>cDNA of eight nuclear encoded subunits of NADH:ubiquinone oxidoreductase: human complex I cDNA characterization completed.</title>
        <authorList>
            <person name="Loeffen J.L.C.M."/>
            <person name="Triepels R.H."/>
            <person name="van den Heuvel L.P."/>
            <person name="Schuelke M."/>
            <person name="Buskens C.A.F."/>
            <person name="Smeets R.J.P."/>
            <person name="Trijbels J.M.F."/>
            <person name="Smeitink J.A.M."/>
        </authorList>
    </citation>
    <scope>NUCLEOTIDE SEQUENCE [MRNA]</scope>
</reference>
<reference key="2">
    <citation type="journal article" date="2000" name="Genome Res.">
        <title>Cloning and functional analysis of cDNAs with open reading frames for 300 previously undefined genes expressed in CD34+ hematopoietic stem/progenitor cells.</title>
        <authorList>
            <person name="Zhang Q.-H."/>
            <person name="Ye M."/>
            <person name="Wu X.-Y."/>
            <person name="Ren S.-X."/>
            <person name="Zhao M."/>
            <person name="Zhao C.-J."/>
            <person name="Fu G."/>
            <person name="Shen Y."/>
            <person name="Fan H.-Y."/>
            <person name="Lu G."/>
            <person name="Zhong M."/>
            <person name="Xu X.-R."/>
            <person name="Han Z.-G."/>
            <person name="Zhang J.-W."/>
            <person name="Tao J."/>
            <person name="Huang Q.-H."/>
            <person name="Zhou J."/>
            <person name="Hu G.-X."/>
            <person name="Gu J."/>
            <person name="Chen S.-J."/>
            <person name="Chen Z."/>
        </authorList>
    </citation>
    <scope>NUCLEOTIDE SEQUENCE [LARGE SCALE MRNA]</scope>
    <source>
        <tissue>Umbilical cord blood</tissue>
    </source>
</reference>
<reference key="3">
    <citation type="submission" date="2004-06" db="EMBL/GenBank/DDBJ databases">
        <title>Cloning of human full open reading frames in Gateway(TM) system entry vector (pDONR201).</title>
        <authorList>
            <person name="Halleck A."/>
            <person name="Ebert L."/>
            <person name="Mkoundinya M."/>
            <person name="Schick M."/>
            <person name="Eisenstein S."/>
            <person name="Neubert P."/>
            <person name="Kstrang K."/>
            <person name="Schatten R."/>
            <person name="Shen B."/>
            <person name="Henze S."/>
            <person name="Mar W."/>
            <person name="Korn B."/>
            <person name="Zuo D."/>
            <person name="Hu Y."/>
            <person name="LaBaer J."/>
        </authorList>
    </citation>
    <scope>NUCLEOTIDE SEQUENCE [LARGE SCALE MRNA]</scope>
</reference>
<reference key="4">
    <citation type="journal article" date="2004" name="Genome Res.">
        <title>The status, quality, and expansion of the NIH full-length cDNA project: the Mammalian Gene Collection (MGC).</title>
        <authorList>
            <consortium name="The MGC Project Team"/>
        </authorList>
    </citation>
    <scope>NUCLEOTIDE SEQUENCE [LARGE SCALE MRNA]</scope>
    <source>
        <tissue>Lung</tissue>
    </source>
</reference>
<reference key="5">
    <citation type="journal article" date="2009" name="Proc. Natl. Acad. Sci. U.S.A.">
        <title>Global profiling of protease cleavage sites by chemoselective labeling of protein N-termini.</title>
        <authorList>
            <person name="Xu G."/>
            <person name="Shin S.B."/>
            <person name="Jaffrey S.R."/>
        </authorList>
    </citation>
    <scope>PROTEIN SEQUENCE [LARGE SCALE ANALYSIS] OF 34-44</scope>
    <source>
        <tissue>Leukemic T-cell</tissue>
    </source>
</reference>
<reference key="6">
    <citation type="journal article" date="2003" name="J. Biol. Chem.">
        <title>The subunit composition of the human NADH dehydrogenase obtained by rapid one-step immunopurification.</title>
        <authorList>
            <person name="Murray J."/>
            <person name="Zhang B."/>
            <person name="Taylor S.W."/>
            <person name="Oglesbee D."/>
            <person name="Fahy E."/>
            <person name="Marusich M.F."/>
            <person name="Ghosh S.S."/>
            <person name="Capaldi R.A."/>
        </authorList>
    </citation>
    <scope>IDENTIFICATION IN THE NADH-UBIQUINONE OXIDOREDUCTASE COMPLEX</scope>
    <scope>IDENTIFICATION BY MASS SPECTROMETRY</scope>
    <scope>SUBCELLULAR LOCATION</scope>
</reference>
<reference key="7">
    <citation type="journal article" date="2015" name="Proteomics">
        <title>N-terminome analysis of the human mitochondrial proteome.</title>
        <authorList>
            <person name="Vaca Jacome A.S."/>
            <person name="Rabilloud T."/>
            <person name="Schaeffer-Reiss C."/>
            <person name="Rompais M."/>
            <person name="Ayoub D."/>
            <person name="Lane L."/>
            <person name="Bairoch A."/>
            <person name="Van Dorsselaer A."/>
            <person name="Carapito C."/>
        </authorList>
    </citation>
    <scope>CLEAVAGE OF TRANSIT PEPTIDE [LARGE SCALE ANALYSIS] AFTER HIS-33</scope>
    <scope>IDENTIFICATION BY MASS SPECTROMETRY [LARGE SCALE ANALYSIS]</scope>
</reference>
<reference key="8">
    <citation type="journal article" date="2016" name="Nature">
        <title>Accessory subunits are integral for assembly and function of human mitochondrial complex I.</title>
        <authorList>
            <person name="Stroud D.A."/>
            <person name="Surgenor E.E."/>
            <person name="Formosa L.E."/>
            <person name="Reljic B."/>
            <person name="Frazier A.E."/>
            <person name="Dibley M.G."/>
            <person name="Osellame L.D."/>
            <person name="Stait T."/>
            <person name="Beilharz T.H."/>
            <person name="Thorburn D.R."/>
            <person name="Salim A."/>
            <person name="Ryan M.T."/>
        </authorList>
    </citation>
    <scope>FUNCTION</scope>
    <scope>IDENTIFICATION IN THE NADH-UBIQUINONE OXIDOREDUCTASE COMPLEX</scope>
</reference>
<dbReference type="EMBL" id="AF050639">
    <property type="protein sequence ID" value="AAD05428.1"/>
    <property type="molecule type" value="mRNA"/>
</dbReference>
<dbReference type="EMBL" id="AF067166">
    <property type="protein sequence ID" value="AAD32450.1"/>
    <property type="molecule type" value="mRNA"/>
</dbReference>
<dbReference type="EMBL" id="CR542121">
    <property type="protein sequence ID" value="CAG46918.1"/>
    <property type="molecule type" value="mRNA"/>
</dbReference>
<dbReference type="EMBL" id="BC001168">
    <property type="status" value="NOT_ANNOTATED_CDS"/>
    <property type="molecule type" value="mRNA"/>
</dbReference>
<dbReference type="CCDS" id="CCDS5862.1"/>
<dbReference type="PIR" id="JE0384">
    <property type="entry name" value="JE0384"/>
</dbReference>
<dbReference type="RefSeq" id="NP_004537.1">
    <property type="nucleotide sequence ID" value="NM_004546.3"/>
</dbReference>
<dbReference type="PDB" id="5XTC">
    <property type="method" value="EM"/>
    <property type="resolution" value="3.70 A"/>
    <property type="chains" value="Y=39-97"/>
</dbReference>
<dbReference type="PDB" id="5XTD">
    <property type="method" value="EM"/>
    <property type="resolution" value="3.70 A"/>
    <property type="chains" value="Y=39-97"/>
</dbReference>
<dbReference type="PDB" id="5XTH">
    <property type="method" value="EM"/>
    <property type="resolution" value="3.90 A"/>
    <property type="chains" value="Y=39-97"/>
</dbReference>
<dbReference type="PDB" id="5XTI">
    <property type="method" value="EM"/>
    <property type="resolution" value="17.40 A"/>
    <property type="chains" value="BY/Y=39-97"/>
</dbReference>
<dbReference type="PDBsum" id="5XTC"/>
<dbReference type="PDBsum" id="5XTD"/>
<dbReference type="PDBsum" id="5XTH"/>
<dbReference type="PDBsum" id="5XTI"/>
<dbReference type="SMR" id="O95178"/>
<dbReference type="BioGRID" id="110788">
    <property type="interactions" value="36"/>
</dbReference>
<dbReference type="ComplexPortal" id="CPX-577">
    <property type="entry name" value="Mitochondrial respiratory chain complex I"/>
</dbReference>
<dbReference type="CORUM" id="O95178"/>
<dbReference type="FunCoup" id="O95178">
    <property type="interactions" value="479"/>
</dbReference>
<dbReference type="IntAct" id="O95178">
    <property type="interactions" value="5"/>
</dbReference>
<dbReference type="STRING" id="9606.ENSP00000419087"/>
<dbReference type="BindingDB" id="O95178"/>
<dbReference type="ChEMBL" id="CHEMBL2363065"/>
<dbReference type="DrugBank" id="DB00157">
    <property type="generic name" value="NADH"/>
</dbReference>
<dbReference type="DrugCentral" id="O95178"/>
<dbReference type="iPTMnet" id="O95178"/>
<dbReference type="PhosphoSitePlus" id="O95178"/>
<dbReference type="BioMuta" id="NDUFB2"/>
<dbReference type="jPOST" id="O95178"/>
<dbReference type="MassIVE" id="O95178"/>
<dbReference type="PaxDb" id="9606-ENSP00000419087"/>
<dbReference type="PeptideAtlas" id="O95178"/>
<dbReference type="ProteomicsDB" id="50689"/>
<dbReference type="Pumba" id="O95178"/>
<dbReference type="TopDownProteomics" id="O95178"/>
<dbReference type="Antibodypedia" id="46193">
    <property type="antibodies" value="62 antibodies from 22 providers"/>
</dbReference>
<dbReference type="DNASU" id="4708"/>
<dbReference type="Ensembl" id="ENST00000247866.9">
    <property type="protein sequence ID" value="ENSP00000247866.4"/>
    <property type="gene ID" value="ENSG00000090266.13"/>
</dbReference>
<dbReference type="Ensembl" id="ENST00000465506.5">
    <property type="protein sequence ID" value="ENSP00000419357.1"/>
    <property type="gene ID" value="ENSG00000090266.13"/>
</dbReference>
<dbReference type="Ensembl" id="ENST00000476279.5">
    <property type="protein sequence ID" value="ENSP00000419087.1"/>
    <property type="gene ID" value="ENSG00000090266.13"/>
</dbReference>
<dbReference type="GeneID" id="4708"/>
<dbReference type="KEGG" id="hsa:4708"/>
<dbReference type="MANE-Select" id="ENST00000247866.9">
    <property type="protein sequence ID" value="ENSP00000247866.4"/>
    <property type="RefSeq nucleotide sequence ID" value="NM_004546.3"/>
    <property type="RefSeq protein sequence ID" value="NP_004537.1"/>
</dbReference>
<dbReference type="UCSC" id="uc003vwa.4">
    <property type="organism name" value="human"/>
</dbReference>
<dbReference type="AGR" id="HGNC:7697"/>
<dbReference type="CTD" id="4708"/>
<dbReference type="DisGeNET" id="4708"/>
<dbReference type="GeneCards" id="NDUFB2"/>
<dbReference type="HGNC" id="HGNC:7697">
    <property type="gene designation" value="NDUFB2"/>
</dbReference>
<dbReference type="HPA" id="ENSG00000090266">
    <property type="expression patterns" value="Low tissue specificity"/>
</dbReference>
<dbReference type="MalaCards" id="NDUFB2"/>
<dbReference type="MIM" id="603838">
    <property type="type" value="gene"/>
</dbReference>
<dbReference type="neXtProt" id="NX_O95178"/>
<dbReference type="OpenTargets" id="ENSG00000090266"/>
<dbReference type="PharmGKB" id="PA31503"/>
<dbReference type="VEuPathDB" id="HostDB:ENSG00000090266"/>
<dbReference type="eggNOG" id="ENOG502S524">
    <property type="taxonomic scope" value="Eukaryota"/>
</dbReference>
<dbReference type="GeneTree" id="ENSGT00390000004044"/>
<dbReference type="HOGENOM" id="CLU_177133_1_0_1"/>
<dbReference type="InParanoid" id="O95178"/>
<dbReference type="OMA" id="HLWHDPD"/>
<dbReference type="OrthoDB" id="6241903at2759"/>
<dbReference type="PAN-GO" id="O95178">
    <property type="GO annotations" value="1 GO annotation based on evolutionary models"/>
</dbReference>
<dbReference type="PhylomeDB" id="O95178"/>
<dbReference type="TreeFam" id="TF316619"/>
<dbReference type="BioCyc" id="MetaCyc:HS01679-MONOMER"/>
<dbReference type="PathwayCommons" id="O95178"/>
<dbReference type="Reactome" id="R-HSA-611105">
    <property type="pathway name" value="Respiratory electron transport"/>
</dbReference>
<dbReference type="Reactome" id="R-HSA-6799198">
    <property type="pathway name" value="Complex I biogenesis"/>
</dbReference>
<dbReference type="SignaLink" id="O95178"/>
<dbReference type="SIGNOR" id="O95178"/>
<dbReference type="BioGRID-ORCS" id="4708">
    <property type="hits" value="191 hits in 1173 CRISPR screens"/>
</dbReference>
<dbReference type="ChiTaRS" id="NDUFB2">
    <property type="organism name" value="human"/>
</dbReference>
<dbReference type="GeneWiki" id="NDUFB2"/>
<dbReference type="GenomeRNAi" id="4708"/>
<dbReference type="Pharos" id="O95178">
    <property type="development level" value="Tclin"/>
</dbReference>
<dbReference type="PRO" id="PR:O95178"/>
<dbReference type="Proteomes" id="UP000005640">
    <property type="component" value="Chromosome 7"/>
</dbReference>
<dbReference type="RNAct" id="O95178">
    <property type="molecule type" value="protein"/>
</dbReference>
<dbReference type="Bgee" id="ENSG00000090266">
    <property type="expression patterns" value="Expressed in apex of heart and 204 other cell types or tissues"/>
</dbReference>
<dbReference type="ExpressionAtlas" id="O95178">
    <property type="expression patterns" value="baseline and differential"/>
</dbReference>
<dbReference type="GO" id="GO:0005743">
    <property type="term" value="C:mitochondrial inner membrane"/>
    <property type="evidence" value="ECO:0000314"/>
    <property type="project" value="ComplexPortal"/>
</dbReference>
<dbReference type="GO" id="GO:0005739">
    <property type="term" value="C:mitochondrion"/>
    <property type="evidence" value="ECO:0006056"/>
    <property type="project" value="FlyBase"/>
</dbReference>
<dbReference type="GO" id="GO:0045271">
    <property type="term" value="C:respiratory chain complex I"/>
    <property type="evidence" value="ECO:0000314"/>
    <property type="project" value="UniProtKB"/>
</dbReference>
<dbReference type="GO" id="GO:0008137">
    <property type="term" value="F:NADH dehydrogenase (ubiquinone) activity"/>
    <property type="evidence" value="ECO:0000303"/>
    <property type="project" value="UniProtKB"/>
</dbReference>
<dbReference type="GO" id="GO:0009060">
    <property type="term" value="P:aerobic respiration"/>
    <property type="evidence" value="ECO:0000303"/>
    <property type="project" value="ComplexPortal"/>
</dbReference>
<dbReference type="GO" id="GO:0006120">
    <property type="term" value="P:mitochondrial electron transport, NADH to ubiquinone"/>
    <property type="evidence" value="ECO:0000303"/>
    <property type="project" value="UniProtKB"/>
</dbReference>
<dbReference type="GO" id="GO:0032981">
    <property type="term" value="P:mitochondrial respiratory chain complex I assembly"/>
    <property type="evidence" value="ECO:0000318"/>
    <property type="project" value="GO_Central"/>
</dbReference>
<dbReference type="GO" id="GO:0042776">
    <property type="term" value="P:proton motive force-driven mitochondrial ATP synthesis"/>
    <property type="evidence" value="ECO:0000303"/>
    <property type="project" value="ComplexPortal"/>
</dbReference>
<dbReference type="InterPro" id="IPR026627">
    <property type="entry name" value="NDUFB2_animal"/>
</dbReference>
<dbReference type="PANTHER" id="PTHR15223:SF1">
    <property type="entry name" value="NADH DEHYDROGENASE [UBIQUINONE] 1 BETA SUBCOMPLEX SUBUNIT 2, MITOCHONDRIAL"/>
    <property type="match status" value="1"/>
</dbReference>
<dbReference type="PANTHER" id="PTHR15223">
    <property type="entry name" value="NADH-UBIQUINONE OXIDOREDUCTASE AGGG SUBUNIT"/>
    <property type="match status" value="1"/>
</dbReference>
<dbReference type="Pfam" id="PF14813">
    <property type="entry name" value="NADH_B2"/>
    <property type="match status" value="1"/>
</dbReference>